<dbReference type="EC" id="2.7.1.182"/>
<dbReference type="EMBL" id="DQ163025">
    <property type="protein sequence ID" value="ABA42674.1"/>
    <property type="molecule type" value="mRNA"/>
</dbReference>
<dbReference type="STRING" id="4565.Q2N2K3"/>
<dbReference type="PaxDb" id="4565-Traes_2AL_C0BC1CE02.2"/>
<dbReference type="EnsemblPlants" id="TraesCAD_scaffold_115222_01G000200.1">
    <property type="protein sequence ID" value="TraesCAD_scaffold_115222_01G000200.1"/>
    <property type="gene ID" value="TraesCAD_scaffold_115222_01G000200"/>
</dbReference>
<dbReference type="EnsemblPlants" id="TraesLAC2D03G01241270.1">
    <property type="protein sequence ID" value="TraesLAC2D03G01241270.1"/>
    <property type="gene ID" value="TraesLAC2D03G01241270"/>
</dbReference>
<dbReference type="EnsemblPlants" id="TraesROB_scaffold_137322_01G000100.1">
    <property type="protein sequence ID" value="TraesROB_scaffold_137322_01G000100.1"/>
    <property type="gene ID" value="TraesROB_scaffold_137322_01G000100"/>
</dbReference>
<dbReference type="EnsemblPlants" id="TraesWEE_scaffold_123429_01G000200.1">
    <property type="protein sequence ID" value="TraesWEE_scaffold_123429_01G000200.1"/>
    <property type="gene ID" value="TraesWEE_scaffold_123429_01G000200"/>
</dbReference>
<dbReference type="Gramene" id="TraesCAD_scaffold_115222_01G000200.1">
    <property type="protein sequence ID" value="TraesCAD_scaffold_115222_01G000200.1"/>
    <property type="gene ID" value="TraesCAD_scaffold_115222_01G000200"/>
</dbReference>
<dbReference type="Gramene" id="TraesLAC2D03G01241270.1">
    <property type="protein sequence ID" value="TraesLAC2D03G01241270.1"/>
    <property type="gene ID" value="TraesLAC2D03G01241270"/>
</dbReference>
<dbReference type="Gramene" id="TraesROB_scaffold_137322_01G000100.1">
    <property type="protein sequence ID" value="TraesROB_scaffold_137322_01G000100.1"/>
    <property type="gene ID" value="TraesROB_scaffold_137322_01G000100"/>
</dbReference>
<dbReference type="Gramene" id="TraesWEE_scaffold_123429_01G000200.1">
    <property type="protein sequence ID" value="TraesWEE_scaffold_123429_01G000200.1"/>
    <property type="gene ID" value="TraesWEE_scaffold_123429_01G000200"/>
</dbReference>
<dbReference type="eggNOG" id="KOG4453">
    <property type="taxonomic scope" value="Eukaryota"/>
</dbReference>
<dbReference type="UniPathway" id="UPA00160"/>
<dbReference type="Proteomes" id="UP000019116">
    <property type="component" value="Unplaced"/>
</dbReference>
<dbReference type="ExpressionAtlas" id="Q2N2K3">
    <property type="expression patterns" value="baseline and differential"/>
</dbReference>
<dbReference type="GO" id="GO:0009507">
    <property type="term" value="C:chloroplast"/>
    <property type="evidence" value="ECO:0000318"/>
    <property type="project" value="GO_Central"/>
</dbReference>
<dbReference type="GO" id="GO:0031969">
    <property type="term" value="C:chloroplast membrane"/>
    <property type="evidence" value="ECO:0007669"/>
    <property type="project" value="UniProtKB-SubCell"/>
</dbReference>
<dbReference type="GO" id="GO:0010276">
    <property type="term" value="F:phytol kinase activity"/>
    <property type="evidence" value="ECO:0000318"/>
    <property type="project" value="GO_Central"/>
</dbReference>
<dbReference type="GO" id="GO:0010189">
    <property type="term" value="P:vitamin E biosynthetic process"/>
    <property type="evidence" value="ECO:0000318"/>
    <property type="project" value="GO_Central"/>
</dbReference>
<dbReference type="InterPro" id="IPR039606">
    <property type="entry name" value="Phytol/farnesol_kinase"/>
</dbReference>
<dbReference type="PANTHER" id="PTHR32523:SF8">
    <property type="entry name" value="DOLICHOL KINASE"/>
    <property type="match status" value="1"/>
</dbReference>
<dbReference type="PANTHER" id="PTHR32523">
    <property type="entry name" value="PHYTOL KINASE 1, CHLOROPLASTIC"/>
    <property type="match status" value="1"/>
</dbReference>
<accession>Q2N2K3</accession>
<keyword id="KW-0150">Chloroplast</keyword>
<keyword id="KW-0418">Kinase</keyword>
<keyword id="KW-0472">Membrane</keyword>
<keyword id="KW-0934">Plastid</keyword>
<keyword id="KW-1185">Reference proteome</keyword>
<keyword id="KW-0808">Transferase</keyword>
<keyword id="KW-0809">Transit peptide</keyword>
<keyword id="KW-0812">Transmembrane</keyword>
<keyword id="KW-1133">Transmembrane helix</keyword>
<feature type="transit peptide" description="Chloroplast" evidence="2">
    <location>
        <begin position="1"/>
        <end position="36"/>
    </location>
</feature>
<feature type="chain" id="PRO_0000226597" description="Probable phytol kinase, chloroplastic">
    <location>
        <begin position="37"/>
        <end position="300"/>
    </location>
</feature>
<feature type="transmembrane region" description="Helical" evidence="2">
    <location>
        <begin position="60"/>
        <end position="78"/>
    </location>
</feature>
<feature type="transmembrane region" description="Helical" evidence="2">
    <location>
        <begin position="98"/>
        <end position="118"/>
    </location>
</feature>
<feature type="transmembrane region" description="Helical" evidence="2">
    <location>
        <begin position="122"/>
        <end position="142"/>
    </location>
</feature>
<feature type="transmembrane region" description="Helical" evidence="2">
    <location>
        <begin position="168"/>
        <end position="188"/>
    </location>
</feature>
<feature type="transmembrane region" description="Helical" evidence="2">
    <location>
        <begin position="227"/>
        <end position="247"/>
    </location>
</feature>
<feature type="transmembrane region" description="Helical" evidence="2">
    <location>
        <begin position="254"/>
        <end position="274"/>
    </location>
</feature>
<feature type="transmembrane region" description="Helical" evidence="2">
    <location>
        <begin position="276"/>
        <end position="296"/>
    </location>
</feature>
<organism>
    <name type="scientific">Triticum aestivum</name>
    <name type="common">Wheat</name>
    <dbReference type="NCBI Taxonomy" id="4565"/>
    <lineage>
        <taxon>Eukaryota</taxon>
        <taxon>Viridiplantae</taxon>
        <taxon>Streptophyta</taxon>
        <taxon>Embryophyta</taxon>
        <taxon>Tracheophyta</taxon>
        <taxon>Spermatophyta</taxon>
        <taxon>Magnoliopsida</taxon>
        <taxon>Liliopsida</taxon>
        <taxon>Poales</taxon>
        <taxon>Poaceae</taxon>
        <taxon>BOP clade</taxon>
        <taxon>Pooideae</taxon>
        <taxon>Triticodae</taxon>
        <taxon>Triticeae</taxon>
        <taxon>Triticinae</taxon>
        <taxon>Triticum</taxon>
    </lineage>
</organism>
<reference key="1">
    <citation type="journal article" date="2006" name="Plant Cell">
        <title>The Arabidopsis vitamin E pathway gene5-1 mutant reveals a critical role for phytol kinase in seed tocopherol biosynthesis.</title>
        <authorList>
            <person name="Valentin H.E."/>
            <person name="Lincoln K."/>
            <person name="Moshiri F."/>
            <person name="Jensen P.K."/>
            <person name="Qi Q."/>
            <person name="Venkatesh T.V."/>
            <person name="Karunanandaa B."/>
            <person name="Baszis S.R."/>
            <person name="Norris S.R."/>
            <person name="Savidge B."/>
            <person name="Gruys K.J."/>
            <person name="Last R.L."/>
        </authorList>
    </citation>
    <scope>NUCLEOTIDE SEQUENCE [MRNA]</scope>
</reference>
<comment type="function">
    <text evidence="1">Involved in the activation and reutilization of phytol from chlorophyll degradation in plant metabolism, including tocopherol biosynthesis. Catalyzes the conversion of phytol to phytol monophosphate (PMP) (By similarity).</text>
</comment>
<comment type="catalytic activity">
    <reaction>
        <text>phytol + CTP = phytyl phosphate + CDP + H(+)</text>
        <dbReference type="Rhea" id="RHEA:38055"/>
        <dbReference type="ChEBI" id="CHEBI:15378"/>
        <dbReference type="ChEBI" id="CHEBI:17327"/>
        <dbReference type="ChEBI" id="CHEBI:37563"/>
        <dbReference type="ChEBI" id="CHEBI:58069"/>
        <dbReference type="ChEBI" id="CHEBI:75483"/>
        <dbReference type="EC" id="2.7.1.182"/>
    </reaction>
</comment>
<comment type="pathway">
    <text>Cofactor biosynthesis; tocopherol biosynthesis.</text>
</comment>
<comment type="subcellular location">
    <subcellularLocation>
        <location evidence="3">Plastid</location>
        <location evidence="3">Chloroplast membrane</location>
        <topology evidence="3">Multi-pass membrane protein</topology>
    </subcellularLocation>
</comment>
<comment type="similarity">
    <text evidence="3">Belongs to the polyprenol kinase family.</text>
</comment>
<sequence>MAAARPALPSSPTSLLLARSTSAPDLAARRPRRWLVAAAGVPAVAGALAASASTPAASMLLRDGGATLLVTAGAYSLVRAFDALTERRLVQQSLSRKVVHVLSGVFFMASWPLFSNSTSARFFAAVVPFLNCVRLLTYGLGFYSDEALVKSVTREGKREELLRGPLYYVIVLLIIVLVFWRDSPIGIVSLSMMSGGDGFADIVGRRFGSLKLPFNKKKSWVGSAAMFISGFLLSALMLSYFSWLGYIHVSWDQALGKLVLVALAATVVECIPVTDVVDDNISVPLATMLVAFLLFGNTAN</sequence>
<proteinExistence type="evidence at transcript level"/>
<evidence type="ECO:0000250" key="1"/>
<evidence type="ECO:0000255" key="2"/>
<evidence type="ECO:0000305" key="3"/>
<protein>
    <recommendedName>
        <fullName>Probable phytol kinase, chloroplastic</fullName>
        <ecNumber>2.7.1.182</ecNumber>
    </recommendedName>
</protein>
<name>PHYK_WHEAT</name>